<proteinExistence type="inferred from homology"/>
<sequence>MAKAKKKGATLFKVVSTEGTGFFYLVCRNLKNKQEKYSFRKYDPVVRKHVLFKEAKLNK</sequence>
<feature type="chain" id="PRO_0000356585" description="Large ribosomal subunit protein bL33">
    <location>
        <begin position="1"/>
        <end position="59"/>
    </location>
</feature>
<reference key="1">
    <citation type="journal article" date="2006" name="PLoS Genet.">
        <title>Comparative genomics of emerging human ehrlichiosis agents.</title>
        <authorList>
            <person name="Dunning Hotopp J.C."/>
            <person name="Lin M."/>
            <person name="Madupu R."/>
            <person name="Crabtree J."/>
            <person name="Angiuoli S.V."/>
            <person name="Eisen J.A."/>
            <person name="Seshadri R."/>
            <person name="Ren Q."/>
            <person name="Wu M."/>
            <person name="Utterback T.R."/>
            <person name="Smith S."/>
            <person name="Lewis M."/>
            <person name="Khouri H."/>
            <person name="Zhang C."/>
            <person name="Niu H."/>
            <person name="Lin Q."/>
            <person name="Ohashi N."/>
            <person name="Zhi N."/>
            <person name="Nelson W.C."/>
            <person name="Brinkac L.M."/>
            <person name="Dodson R.J."/>
            <person name="Rosovitz M.J."/>
            <person name="Sundaram J.P."/>
            <person name="Daugherty S.C."/>
            <person name="Davidsen T."/>
            <person name="Durkin A.S."/>
            <person name="Gwinn M.L."/>
            <person name="Haft D.H."/>
            <person name="Selengut J.D."/>
            <person name="Sullivan S.A."/>
            <person name="Zafar N."/>
            <person name="Zhou L."/>
            <person name="Benahmed F."/>
            <person name="Forberger H."/>
            <person name="Halpin R."/>
            <person name="Mulligan S."/>
            <person name="Robinson J."/>
            <person name="White O."/>
            <person name="Rikihisa Y."/>
            <person name="Tettelin H."/>
        </authorList>
    </citation>
    <scope>NUCLEOTIDE SEQUENCE [LARGE SCALE GENOMIC DNA]</scope>
    <source>
        <strain>ATCC VR-367 / Miyayama</strain>
    </source>
</reference>
<protein>
    <recommendedName>
        <fullName evidence="1">Large ribosomal subunit protein bL33</fullName>
    </recommendedName>
    <alternativeName>
        <fullName evidence="2">50S ribosomal protein L33</fullName>
    </alternativeName>
</protein>
<gene>
    <name evidence="1" type="primary">rpmG</name>
    <name type="ordered locus">NSE_0257</name>
</gene>
<comment type="similarity">
    <text evidence="1">Belongs to the bacterial ribosomal protein bL33 family.</text>
</comment>
<keyword id="KW-0687">Ribonucleoprotein</keyword>
<keyword id="KW-0689">Ribosomal protein</keyword>
<name>RL33_NEOSM</name>
<accession>Q2GEE6</accession>
<dbReference type="EMBL" id="CP000237">
    <property type="protein sequence ID" value="ABD45980.1"/>
    <property type="molecule type" value="Genomic_DNA"/>
</dbReference>
<dbReference type="RefSeq" id="WP_011451656.1">
    <property type="nucleotide sequence ID" value="NC_007798.1"/>
</dbReference>
<dbReference type="SMR" id="Q2GEE6"/>
<dbReference type="STRING" id="222891.NSE_0257"/>
<dbReference type="KEGG" id="nse:NSE_0257"/>
<dbReference type="eggNOG" id="COG0267">
    <property type="taxonomic scope" value="Bacteria"/>
</dbReference>
<dbReference type="HOGENOM" id="CLU_190949_1_0_5"/>
<dbReference type="OrthoDB" id="21586at2"/>
<dbReference type="Proteomes" id="UP000001942">
    <property type="component" value="Chromosome"/>
</dbReference>
<dbReference type="GO" id="GO:0005737">
    <property type="term" value="C:cytoplasm"/>
    <property type="evidence" value="ECO:0007669"/>
    <property type="project" value="UniProtKB-ARBA"/>
</dbReference>
<dbReference type="GO" id="GO:0015934">
    <property type="term" value="C:large ribosomal subunit"/>
    <property type="evidence" value="ECO:0007669"/>
    <property type="project" value="TreeGrafter"/>
</dbReference>
<dbReference type="GO" id="GO:0003735">
    <property type="term" value="F:structural constituent of ribosome"/>
    <property type="evidence" value="ECO:0007669"/>
    <property type="project" value="InterPro"/>
</dbReference>
<dbReference type="GO" id="GO:0006412">
    <property type="term" value="P:translation"/>
    <property type="evidence" value="ECO:0007669"/>
    <property type="project" value="UniProtKB-UniRule"/>
</dbReference>
<dbReference type="Gene3D" id="2.20.28.120">
    <property type="entry name" value="Ribosomal protein L33"/>
    <property type="match status" value="1"/>
</dbReference>
<dbReference type="HAMAP" id="MF_00294">
    <property type="entry name" value="Ribosomal_bL33"/>
    <property type="match status" value="1"/>
</dbReference>
<dbReference type="InterPro" id="IPR001705">
    <property type="entry name" value="Ribosomal_bL33"/>
</dbReference>
<dbReference type="InterPro" id="IPR038584">
    <property type="entry name" value="Ribosomal_bL33_sf"/>
</dbReference>
<dbReference type="InterPro" id="IPR011332">
    <property type="entry name" value="Ribosomal_zn-bd"/>
</dbReference>
<dbReference type="NCBIfam" id="NF001860">
    <property type="entry name" value="PRK00595.1"/>
    <property type="match status" value="1"/>
</dbReference>
<dbReference type="NCBIfam" id="TIGR01023">
    <property type="entry name" value="rpmG_bact"/>
    <property type="match status" value="1"/>
</dbReference>
<dbReference type="PANTHER" id="PTHR15238">
    <property type="entry name" value="54S RIBOSOMAL PROTEIN L39, MITOCHONDRIAL"/>
    <property type="match status" value="1"/>
</dbReference>
<dbReference type="PANTHER" id="PTHR15238:SF1">
    <property type="entry name" value="LARGE RIBOSOMAL SUBUNIT PROTEIN BL33M"/>
    <property type="match status" value="1"/>
</dbReference>
<dbReference type="Pfam" id="PF00471">
    <property type="entry name" value="Ribosomal_L33"/>
    <property type="match status" value="1"/>
</dbReference>
<dbReference type="SUPFAM" id="SSF57829">
    <property type="entry name" value="Zn-binding ribosomal proteins"/>
    <property type="match status" value="1"/>
</dbReference>
<organism>
    <name type="scientific">Neorickettsia sennetsu (strain ATCC VR-367 / Miyayama)</name>
    <name type="common">Ehrlichia sennetsu</name>
    <dbReference type="NCBI Taxonomy" id="222891"/>
    <lineage>
        <taxon>Bacteria</taxon>
        <taxon>Pseudomonadati</taxon>
        <taxon>Pseudomonadota</taxon>
        <taxon>Alphaproteobacteria</taxon>
        <taxon>Rickettsiales</taxon>
        <taxon>Anaplasmataceae</taxon>
        <taxon>Neorickettsia</taxon>
    </lineage>
</organism>
<evidence type="ECO:0000255" key="1">
    <source>
        <dbReference type="HAMAP-Rule" id="MF_00294"/>
    </source>
</evidence>
<evidence type="ECO:0000305" key="2"/>